<keyword id="KW-0256">Endoplasmic reticulum</keyword>
<keyword id="KW-0328">Glycosyltransferase</keyword>
<keyword id="KW-0472">Membrane</keyword>
<keyword id="KW-1185">Reference proteome</keyword>
<keyword id="KW-0808">Transferase</keyword>
<keyword id="KW-0812">Transmembrane</keyword>
<keyword id="KW-1133">Transmembrane helix</keyword>
<dbReference type="EC" id="2.4.1.260" evidence="1"/>
<dbReference type="EMBL" id="AE014297">
    <property type="protein sequence ID" value="AAF54441.1"/>
    <property type="molecule type" value="Genomic_DNA"/>
</dbReference>
<dbReference type="EMBL" id="AY071132">
    <property type="protein sequence ID" value="AAL48754.1"/>
    <property type="molecule type" value="mRNA"/>
</dbReference>
<dbReference type="RefSeq" id="NP_649939.1">
    <property type="nucleotide sequence ID" value="NM_141682.4"/>
</dbReference>
<dbReference type="BioGRID" id="66349">
    <property type="interactions" value="1"/>
</dbReference>
<dbReference type="FunCoup" id="Q9VH78">
    <property type="interactions" value="969"/>
</dbReference>
<dbReference type="IntAct" id="Q9VH78">
    <property type="interactions" value="2"/>
</dbReference>
<dbReference type="STRING" id="7227.FBpp0081608"/>
<dbReference type="CAZy" id="GT22">
    <property type="family name" value="Glycosyltransferase Family 22"/>
</dbReference>
<dbReference type="PaxDb" id="7227-FBpp0081608"/>
<dbReference type="DNASU" id="41191"/>
<dbReference type="EnsemblMetazoa" id="FBtr0082130">
    <property type="protein sequence ID" value="FBpp0081608"/>
    <property type="gene ID" value="FBgn0037743"/>
</dbReference>
<dbReference type="GeneID" id="41191"/>
<dbReference type="KEGG" id="dme:Dmel_CG8412"/>
<dbReference type="UCSC" id="CG8412-RA">
    <property type="organism name" value="d. melanogaster"/>
</dbReference>
<dbReference type="AGR" id="FB:FBgn0037743"/>
<dbReference type="CTD" id="79087"/>
<dbReference type="FlyBase" id="FBgn0037743">
    <property type="gene designation" value="Alg12"/>
</dbReference>
<dbReference type="VEuPathDB" id="VectorBase:FBgn0037743"/>
<dbReference type="eggNOG" id="KOG2516">
    <property type="taxonomic scope" value="Eukaryota"/>
</dbReference>
<dbReference type="GeneTree" id="ENSGT00950000183090"/>
<dbReference type="HOGENOM" id="CLU_008917_3_1_1"/>
<dbReference type="InParanoid" id="Q9VH78"/>
<dbReference type="OMA" id="CIFIMRR"/>
<dbReference type="OrthoDB" id="19039at2759"/>
<dbReference type="PhylomeDB" id="Q9VH78"/>
<dbReference type="Reactome" id="R-DME-446193">
    <property type="pathway name" value="Biosynthesis of the N-glycan precursor (dolichol lipid-linked oligosaccharide, LLO) and transfer to a nascent protein"/>
</dbReference>
<dbReference type="SignaLink" id="Q9VH78"/>
<dbReference type="UniPathway" id="UPA00378"/>
<dbReference type="BioGRID-ORCS" id="41191">
    <property type="hits" value="0 hits in 1 CRISPR screen"/>
</dbReference>
<dbReference type="GenomeRNAi" id="41191"/>
<dbReference type="PRO" id="PR:Q9VH78"/>
<dbReference type="Proteomes" id="UP000000803">
    <property type="component" value="Chromosome 3R"/>
</dbReference>
<dbReference type="Bgee" id="FBgn0037743">
    <property type="expression patterns" value="Expressed in lamina monopolar neuron L1 (Drosophila) in insect head and 107 other cell types or tissues"/>
</dbReference>
<dbReference type="GO" id="GO:0005789">
    <property type="term" value="C:endoplasmic reticulum membrane"/>
    <property type="evidence" value="ECO:0000318"/>
    <property type="project" value="GO_Central"/>
</dbReference>
<dbReference type="GO" id="GO:0000009">
    <property type="term" value="F:alpha-1,6-mannosyltransferase activity"/>
    <property type="evidence" value="ECO:0000318"/>
    <property type="project" value="GO_Central"/>
</dbReference>
<dbReference type="GO" id="GO:0052917">
    <property type="term" value="F:dolichyl-P-Man:Man(7)GlcNAc(2)-PP-dolichol alpha-1,6-mannosyltransferase"/>
    <property type="evidence" value="ECO:0000250"/>
    <property type="project" value="FlyBase"/>
</dbReference>
<dbReference type="GO" id="GO:0006488">
    <property type="term" value="P:dolichol-linked oligosaccharide biosynthetic process"/>
    <property type="evidence" value="ECO:0000250"/>
    <property type="project" value="UniProtKB"/>
</dbReference>
<dbReference type="GO" id="GO:0006486">
    <property type="term" value="P:protein glycosylation"/>
    <property type="evidence" value="ECO:0000250"/>
    <property type="project" value="UniProtKB"/>
</dbReference>
<dbReference type="GO" id="GO:0006487">
    <property type="term" value="P:protein N-linked glycosylation"/>
    <property type="evidence" value="ECO:0000318"/>
    <property type="project" value="GO_Central"/>
</dbReference>
<dbReference type="InterPro" id="IPR005599">
    <property type="entry name" value="GPI_mannosylTrfase"/>
</dbReference>
<dbReference type="PANTHER" id="PTHR22760:SF1">
    <property type="entry name" value="DOL-P-MAN:MAN(7)GLCNAC(2)-PP-DOL ALPHA-1,6-MANNOSYLTRANSFERASE"/>
    <property type="match status" value="1"/>
</dbReference>
<dbReference type="PANTHER" id="PTHR22760">
    <property type="entry name" value="GLYCOSYLTRANSFERASE"/>
    <property type="match status" value="1"/>
</dbReference>
<dbReference type="Pfam" id="PF03901">
    <property type="entry name" value="Glyco_transf_22"/>
    <property type="match status" value="1"/>
</dbReference>
<name>ALG12_DROME</name>
<sequence length="678" mass="76553">MDILIFVTAAAHLVYTPFTKVEESFNLQAMHDILYLRNNFTQYDHHDYPGVVPRTFIGPLVVSIISAPFVLLFETLSINKFWAQYVVRLVLAGAISVAWNSLRQAVTKIYGVEVRLWFTAITITQFHFMFYMTRPLPNIFALPIVLFAIAYWLRDQHKPFIICSGISILVFRSELALFLGILLVVSLLRRKVSIDGLLKVALPAGVCILAATVLVDSFFWRRLLWPEGEVLWYNTVLNKSSNWGTSPFLWYFYSALPRAMGASLVLVPIGVALEPRIRPLVLSALLFVLLYSILPHKELRFIIYVFPVLNIAAACACQRIWMNSAKSTWHSFLALACGAHLLLNVFITLFLLVISGTNYPGGAALSRLHRLEAGTSNVSVHISNLAAQSGVSRFMEINNEWTYSKDETMNYTQADLVAYTHLLVEAKNKQNTELWASLQNEFDTLEFIDCFNSIGIQYNSLLPVRIKTKPCIGILKKRPVAPKEASKTKEKIAKTKTYPVEKETLLAPVKEFPKVIGDPKMKSRLQVDADDDDGIVSTVEEMSLELETDTEPHAGAETIETPLKEINFQELRTLALGQATKKSRAATKMKIRQIIEQHYRAKGKQIENDSAETQKTQGKAGLRQSVKSIIKQEKIKEMIEQIATMDLTRICDLERTSTKDCLKQVIDKIDDSEGLKSK</sequence>
<accession>Q9VH78</accession>
<reference key="1">
    <citation type="journal article" date="2000" name="Science">
        <title>The genome sequence of Drosophila melanogaster.</title>
        <authorList>
            <person name="Adams M.D."/>
            <person name="Celniker S.E."/>
            <person name="Holt R.A."/>
            <person name="Evans C.A."/>
            <person name="Gocayne J.D."/>
            <person name="Amanatides P.G."/>
            <person name="Scherer S.E."/>
            <person name="Li P.W."/>
            <person name="Hoskins R.A."/>
            <person name="Galle R.F."/>
            <person name="George R.A."/>
            <person name="Lewis S.E."/>
            <person name="Richards S."/>
            <person name="Ashburner M."/>
            <person name="Henderson S.N."/>
            <person name="Sutton G.G."/>
            <person name="Wortman J.R."/>
            <person name="Yandell M.D."/>
            <person name="Zhang Q."/>
            <person name="Chen L.X."/>
            <person name="Brandon R.C."/>
            <person name="Rogers Y.-H.C."/>
            <person name="Blazej R.G."/>
            <person name="Champe M."/>
            <person name="Pfeiffer B.D."/>
            <person name="Wan K.H."/>
            <person name="Doyle C."/>
            <person name="Baxter E.G."/>
            <person name="Helt G."/>
            <person name="Nelson C.R."/>
            <person name="Miklos G.L.G."/>
            <person name="Abril J.F."/>
            <person name="Agbayani A."/>
            <person name="An H.-J."/>
            <person name="Andrews-Pfannkoch C."/>
            <person name="Baldwin D."/>
            <person name="Ballew R.M."/>
            <person name="Basu A."/>
            <person name="Baxendale J."/>
            <person name="Bayraktaroglu L."/>
            <person name="Beasley E.M."/>
            <person name="Beeson K.Y."/>
            <person name="Benos P.V."/>
            <person name="Berman B.P."/>
            <person name="Bhandari D."/>
            <person name="Bolshakov S."/>
            <person name="Borkova D."/>
            <person name="Botchan M.R."/>
            <person name="Bouck J."/>
            <person name="Brokstein P."/>
            <person name="Brottier P."/>
            <person name="Burtis K.C."/>
            <person name="Busam D.A."/>
            <person name="Butler H."/>
            <person name="Cadieu E."/>
            <person name="Center A."/>
            <person name="Chandra I."/>
            <person name="Cherry J.M."/>
            <person name="Cawley S."/>
            <person name="Dahlke C."/>
            <person name="Davenport L.B."/>
            <person name="Davies P."/>
            <person name="de Pablos B."/>
            <person name="Delcher A."/>
            <person name="Deng Z."/>
            <person name="Mays A.D."/>
            <person name="Dew I."/>
            <person name="Dietz S.M."/>
            <person name="Dodson K."/>
            <person name="Doup L.E."/>
            <person name="Downes M."/>
            <person name="Dugan-Rocha S."/>
            <person name="Dunkov B.C."/>
            <person name="Dunn P."/>
            <person name="Durbin K.J."/>
            <person name="Evangelista C.C."/>
            <person name="Ferraz C."/>
            <person name="Ferriera S."/>
            <person name="Fleischmann W."/>
            <person name="Fosler C."/>
            <person name="Gabrielian A.E."/>
            <person name="Garg N.S."/>
            <person name="Gelbart W.M."/>
            <person name="Glasser K."/>
            <person name="Glodek A."/>
            <person name="Gong F."/>
            <person name="Gorrell J.H."/>
            <person name="Gu Z."/>
            <person name="Guan P."/>
            <person name="Harris M."/>
            <person name="Harris N.L."/>
            <person name="Harvey D.A."/>
            <person name="Heiman T.J."/>
            <person name="Hernandez J.R."/>
            <person name="Houck J."/>
            <person name="Hostin D."/>
            <person name="Houston K.A."/>
            <person name="Howland T.J."/>
            <person name="Wei M.-H."/>
            <person name="Ibegwam C."/>
            <person name="Jalali M."/>
            <person name="Kalush F."/>
            <person name="Karpen G.H."/>
            <person name="Ke Z."/>
            <person name="Kennison J.A."/>
            <person name="Ketchum K.A."/>
            <person name="Kimmel B.E."/>
            <person name="Kodira C.D."/>
            <person name="Kraft C.L."/>
            <person name="Kravitz S."/>
            <person name="Kulp D."/>
            <person name="Lai Z."/>
            <person name="Lasko P."/>
            <person name="Lei Y."/>
            <person name="Levitsky A.A."/>
            <person name="Li J.H."/>
            <person name="Li Z."/>
            <person name="Liang Y."/>
            <person name="Lin X."/>
            <person name="Liu X."/>
            <person name="Mattei B."/>
            <person name="McIntosh T.C."/>
            <person name="McLeod M.P."/>
            <person name="McPherson D."/>
            <person name="Merkulov G."/>
            <person name="Milshina N.V."/>
            <person name="Mobarry C."/>
            <person name="Morris J."/>
            <person name="Moshrefi A."/>
            <person name="Mount S.M."/>
            <person name="Moy M."/>
            <person name="Murphy B."/>
            <person name="Murphy L."/>
            <person name="Muzny D.M."/>
            <person name="Nelson D.L."/>
            <person name="Nelson D.R."/>
            <person name="Nelson K.A."/>
            <person name="Nixon K."/>
            <person name="Nusskern D.R."/>
            <person name="Pacleb J.M."/>
            <person name="Palazzolo M."/>
            <person name="Pittman G.S."/>
            <person name="Pan S."/>
            <person name="Pollard J."/>
            <person name="Puri V."/>
            <person name="Reese M.G."/>
            <person name="Reinert K."/>
            <person name="Remington K."/>
            <person name="Saunders R.D.C."/>
            <person name="Scheeler F."/>
            <person name="Shen H."/>
            <person name="Shue B.C."/>
            <person name="Siden-Kiamos I."/>
            <person name="Simpson M."/>
            <person name="Skupski M.P."/>
            <person name="Smith T.J."/>
            <person name="Spier E."/>
            <person name="Spradling A.C."/>
            <person name="Stapleton M."/>
            <person name="Strong R."/>
            <person name="Sun E."/>
            <person name="Svirskas R."/>
            <person name="Tector C."/>
            <person name="Turner R."/>
            <person name="Venter E."/>
            <person name="Wang A.H."/>
            <person name="Wang X."/>
            <person name="Wang Z.-Y."/>
            <person name="Wassarman D.A."/>
            <person name="Weinstock G.M."/>
            <person name="Weissenbach J."/>
            <person name="Williams S.M."/>
            <person name="Woodage T."/>
            <person name="Worley K.C."/>
            <person name="Wu D."/>
            <person name="Yang S."/>
            <person name="Yao Q.A."/>
            <person name="Ye J."/>
            <person name="Yeh R.-F."/>
            <person name="Zaveri J.S."/>
            <person name="Zhan M."/>
            <person name="Zhang G."/>
            <person name="Zhao Q."/>
            <person name="Zheng L."/>
            <person name="Zheng X.H."/>
            <person name="Zhong F.N."/>
            <person name="Zhong W."/>
            <person name="Zhou X."/>
            <person name="Zhu S.C."/>
            <person name="Zhu X."/>
            <person name="Smith H.O."/>
            <person name="Gibbs R.A."/>
            <person name="Myers E.W."/>
            <person name="Rubin G.M."/>
            <person name="Venter J.C."/>
        </authorList>
    </citation>
    <scope>NUCLEOTIDE SEQUENCE [LARGE SCALE GENOMIC DNA]</scope>
    <source>
        <strain>Berkeley</strain>
    </source>
</reference>
<reference key="2">
    <citation type="journal article" date="2002" name="Genome Biol.">
        <title>Annotation of the Drosophila melanogaster euchromatic genome: a systematic review.</title>
        <authorList>
            <person name="Misra S."/>
            <person name="Crosby M.A."/>
            <person name="Mungall C.J."/>
            <person name="Matthews B.B."/>
            <person name="Campbell K.S."/>
            <person name="Hradecky P."/>
            <person name="Huang Y."/>
            <person name="Kaminker J.S."/>
            <person name="Millburn G.H."/>
            <person name="Prochnik S.E."/>
            <person name="Smith C.D."/>
            <person name="Tupy J.L."/>
            <person name="Whitfield E.J."/>
            <person name="Bayraktaroglu L."/>
            <person name="Berman B.P."/>
            <person name="Bettencourt B.R."/>
            <person name="Celniker S.E."/>
            <person name="de Grey A.D.N.J."/>
            <person name="Drysdale R.A."/>
            <person name="Harris N.L."/>
            <person name="Richter J."/>
            <person name="Russo S."/>
            <person name="Schroeder A.J."/>
            <person name="Shu S.Q."/>
            <person name="Stapleton M."/>
            <person name="Yamada C."/>
            <person name="Ashburner M."/>
            <person name="Gelbart W.M."/>
            <person name="Rubin G.M."/>
            <person name="Lewis S.E."/>
        </authorList>
    </citation>
    <scope>GENOME REANNOTATION</scope>
    <source>
        <strain>Berkeley</strain>
    </source>
</reference>
<reference key="3">
    <citation type="journal article" date="2002" name="Genome Biol.">
        <title>A Drosophila full-length cDNA resource.</title>
        <authorList>
            <person name="Stapleton M."/>
            <person name="Carlson J.W."/>
            <person name="Brokstein P."/>
            <person name="Yu C."/>
            <person name="Champe M."/>
            <person name="George R.A."/>
            <person name="Guarin H."/>
            <person name="Kronmiller B."/>
            <person name="Pacleb J.M."/>
            <person name="Park S."/>
            <person name="Wan K.H."/>
            <person name="Rubin G.M."/>
            <person name="Celniker S.E."/>
        </authorList>
    </citation>
    <scope>NUCLEOTIDE SEQUENCE [LARGE SCALE MRNA]</scope>
    <source>
        <strain>Berkeley</strain>
        <tissue>Embryo</tissue>
    </source>
</reference>
<proteinExistence type="evidence at transcript level"/>
<protein>
    <recommendedName>
        <fullName evidence="1">Dol-P-Man:Man(7)GlcNAc(2)-PP-Dol alpha-1,6-mannosyltransferase</fullName>
        <ecNumber evidence="1">2.4.1.260</ecNumber>
    </recommendedName>
    <alternativeName>
        <fullName>Asparagine-linked glycosylation protein 12 homolog</fullName>
    </alternativeName>
    <alternativeName>
        <fullName>Dolichyl-P-Man:Man(7)GlcNAc(2)-PP-dolichyl-alpha-1,6-mannosyltransferase</fullName>
    </alternativeName>
    <alternativeName>
        <fullName>Mannosyltransferase ALG12 homolog</fullName>
    </alternativeName>
</protein>
<gene>
    <name evidence="4" type="primary">Alg12</name>
    <name evidence="4" type="ORF">CG8412</name>
</gene>
<comment type="function">
    <text evidence="1">Mannosyltransferase that operates in the biosynthetic pathway of dolichol-linked oligosaccharides, the glycan precursors employed in protein asparagine (N)-glycosylation. The assembly of dolichol-linked oligosaccharides begins on the cytosolic side of the endoplasmic reticulum membrane and finishes in its lumen. The sequential addition of sugars to dolichol pyrophosphate produces dolichol-linked oligosaccharides containing fourteen sugars, including two GlcNAcs, nine mannoses and three glucoses. Once assembled, the oligosaccharide is transferred from the lipid to nascent proteins by oligosaccharyltransferases. In the lumen of the endoplasmic reticulum, adds the eighth mannose residue in an alpha-1,6 linkage onto Man(7)GlcNAc(2)-PP-dolichol to produce Man(8)GlcNAc(2)-PP-dolichol.</text>
</comment>
<comment type="catalytic activity">
    <reaction evidence="1">
        <text>an alpha-D-Man-(1-&gt;2)-alpha-D-Man-(1-&gt;2)-alpha-D-Man-(1-&gt;3)-[alpha-D-Man-(1-&gt;2)-alpha-D-Man-(1-&gt;3)-alpha-D-Man-(1-&gt;6)]-beta-D-Man-(1-&gt;4)-beta-D-GlcNAc-(1-&gt;4)-alpha-D-GlcNAc-diphospho-di-trans,poly-cis-dolichol + a di-trans,poly-cis-dolichyl beta-D-mannosyl phosphate = an alpha-D-Man-(1-&gt;2)-alpha-D-Man-(1-&gt;2)-alpha-D-Man-(1-&gt;3)-[alpha-D-Man-(1-&gt;2)-alpha-D-Man-(1-&gt;3)-[alpha-D-Man-(1-&gt;6)]-alpha-D-Man-(1-&gt;6)]-beta-D-Man-(1-&gt;4)-beta-D-GlcNAc-(1-&gt;4)-alpha-D-GlcNAc-diphospho-di-trans,poly-cis-dolichol + a di-trans,poly-cis-dolichyl phosphate + H(+)</text>
        <dbReference type="Rhea" id="RHEA:29535"/>
        <dbReference type="Rhea" id="RHEA-COMP:19498"/>
        <dbReference type="Rhea" id="RHEA-COMP:19501"/>
        <dbReference type="Rhea" id="RHEA-COMP:19518"/>
        <dbReference type="Rhea" id="RHEA-COMP:19519"/>
        <dbReference type="ChEBI" id="CHEBI:15378"/>
        <dbReference type="ChEBI" id="CHEBI:57683"/>
        <dbReference type="ChEBI" id="CHEBI:58211"/>
        <dbReference type="ChEBI" id="CHEBI:132517"/>
        <dbReference type="ChEBI" id="CHEBI:132519"/>
        <dbReference type="EC" id="2.4.1.260"/>
    </reaction>
    <physiologicalReaction direction="left-to-right" evidence="1">
        <dbReference type="Rhea" id="RHEA:29536"/>
    </physiologicalReaction>
</comment>
<comment type="pathway">
    <text evidence="1">Protein modification; protein glycosylation.</text>
</comment>
<comment type="subcellular location">
    <subcellularLocation>
        <location evidence="1">Endoplasmic reticulum membrane</location>
        <topology evidence="2">Multi-pass membrane protein</topology>
    </subcellularLocation>
</comment>
<comment type="similarity">
    <text evidence="3">Belongs to the glycosyltransferase 22 family.</text>
</comment>
<organism>
    <name type="scientific">Drosophila melanogaster</name>
    <name type="common">Fruit fly</name>
    <dbReference type="NCBI Taxonomy" id="7227"/>
    <lineage>
        <taxon>Eukaryota</taxon>
        <taxon>Metazoa</taxon>
        <taxon>Ecdysozoa</taxon>
        <taxon>Arthropoda</taxon>
        <taxon>Hexapoda</taxon>
        <taxon>Insecta</taxon>
        <taxon>Pterygota</taxon>
        <taxon>Neoptera</taxon>
        <taxon>Endopterygota</taxon>
        <taxon>Diptera</taxon>
        <taxon>Brachycera</taxon>
        <taxon>Muscomorpha</taxon>
        <taxon>Ephydroidea</taxon>
        <taxon>Drosophilidae</taxon>
        <taxon>Drosophila</taxon>
        <taxon>Sophophora</taxon>
    </lineage>
</organism>
<evidence type="ECO:0000250" key="1">
    <source>
        <dbReference type="UniProtKB" id="Q9BV10"/>
    </source>
</evidence>
<evidence type="ECO:0000255" key="2"/>
<evidence type="ECO:0000305" key="3"/>
<evidence type="ECO:0000312" key="4">
    <source>
        <dbReference type="FlyBase" id="FBgn0037743"/>
    </source>
</evidence>
<feature type="chain" id="PRO_0000215784" description="Dol-P-Man:Man(7)GlcNAc(2)-PP-Dol alpha-1,6-mannosyltransferase">
    <location>
        <begin position="1"/>
        <end position="678"/>
    </location>
</feature>
<feature type="transmembrane region" description="Helical" evidence="2">
    <location>
        <begin position="1"/>
        <end position="21"/>
    </location>
</feature>
<feature type="transmembrane region" description="Helical" evidence="2">
    <location>
        <begin position="56"/>
        <end position="76"/>
    </location>
</feature>
<feature type="transmembrane region" description="Helical" evidence="2">
    <location>
        <begin position="81"/>
        <end position="101"/>
    </location>
</feature>
<feature type="transmembrane region" description="Helical" evidence="2">
    <location>
        <begin position="109"/>
        <end position="129"/>
    </location>
</feature>
<feature type="transmembrane region" description="Helical" evidence="2">
    <location>
        <begin position="133"/>
        <end position="153"/>
    </location>
</feature>
<feature type="transmembrane region" description="Helical" evidence="2">
    <location>
        <begin position="168"/>
        <end position="188"/>
    </location>
</feature>
<feature type="transmembrane region" description="Helical" evidence="2">
    <location>
        <begin position="200"/>
        <end position="220"/>
    </location>
</feature>
<feature type="transmembrane region" description="Helical" evidence="2">
    <location>
        <begin position="252"/>
        <end position="272"/>
    </location>
</feature>
<feature type="transmembrane region" description="Helical" evidence="2">
    <location>
        <begin position="279"/>
        <end position="299"/>
    </location>
</feature>
<feature type="transmembrane region" description="Helical" evidence="2">
    <location>
        <begin position="301"/>
        <end position="321"/>
    </location>
</feature>
<feature type="transmembrane region" description="Helical" evidence="2">
    <location>
        <begin position="334"/>
        <end position="354"/>
    </location>
</feature>